<organism>
    <name type="scientific">Hordeum vulgare</name>
    <name type="common">Barley</name>
    <dbReference type="NCBI Taxonomy" id="4513"/>
    <lineage>
        <taxon>Eukaryota</taxon>
        <taxon>Viridiplantae</taxon>
        <taxon>Streptophyta</taxon>
        <taxon>Embryophyta</taxon>
        <taxon>Tracheophyta</taxon>
        <taxon>Spermatophyta</taxon>
        <taxon>Magnoliopsida</taxon>
        <taxon>Liliopsida</taxon>
        <taxon>Poales</taxon>
        <taxon>Poaceae</taxon>
        <taxon>BOP clade</taxon>
        <taxon>Pooideae</taxon>
        <taxon>Triticodae</taxon>
        <taxon>Triticeae</taxon>
        <taxon>Hordeinae</taxon>
        <taxon>Hordeum</taxon>
    </lineage>
</organism>
<sequence length="201" mass="23284">MSRYRGPRLKKIRRLGALPGLTRKTPKSGSNLKKKFNSGKKEQYRIRLQEKQKLRFHYGLTERQLLRYVHIAGKAKRSTGQVLLQLLEMRLDNILFRLGMASTIPGARQLVNHRHILVNGRIVNIPSFRCKPRDIITTKDNQRSKGLVQNYIASSDPGKLPSHLTIDTLEYKGLVNKILDRKWVGLKINELLVVEYYSRQT</sequence>
<keyword id="KW-0150">Chloroplast</keyword>
<keyword id="KW-0934">Plastid</keyword>
<keyword id="KW-0687">Ribonucleoprotein</keyword>
<keyword id="KW-0689">Ribosomal protein</keyword>
<keyword id="KW-0694">RNA-binding</keyword>
<keyword id="KW-0699">rRNA-binding</keyword>
<name>RR4_HORVU</name>
<accession>A1E9J3</accession>
<proteinExistence type="inferred from homology"/>
<reference key="1">
    <citation type="journal article" date="2007" name="Theor. Appl. Genet.">
        <title>Complete chloroplast genome sequences of Hordeum vulgare, Sorghum bicolor and Agrostis stolonifera, and comparative analyses with other grass genomes.</title>
        <authorList>
            <person name="Saski C."/>
            <person name="Lee S.-B."/>
            <person name="Fjellheim S."/>
            <person name="Guda C."/>
            <person name="Jansen R.K."/>
            <person name="Luo H."/>
            <person name="Tomkins J."/>
            <person name="Rognli O.A."/>
            <person name="Daniell H."/>
            <person name="Clarke J.L."/>
        </authorList>
    </citation>
    <scope>NUCLEOTIDE SEQUENCE [LARGE SCALE GENOMIC DNA]</scope>
    <source>
        <strain>cv. Morex</strain>
    </source>
</reference>
<evidence type="ECO:0000250" key="1"/>
<evidence type="ECO:0000305" key="2"/>
<gene>
    <name type="primary">rps4</name>
</gene>
<comment type="function">
    <text evidence="1">One of the primary rRNA binding proteins, it binds directly to 16S rRNA where it nucleates assembly of the body of the 30S subunit.</text>
</comment>
<comment type="function">
    <text evidence="1">With S5 and S12 plays an important role in translational accuracy.</text>
</comment>
<comment type="subunit">
    <text evidence="1">Part of the 30S ribosomal subunit. Contacts protein S5. The interaction surface between S4 and S5 is involved in control of translational fidelity (By similarity).</text>
</comment>
<comment type="subcellular location">
    <subcellularLocation>
        <location>Plastid</location>
        <location>Chloroplast</location>
    </subcellularLocation>
</comment>
<comment type="similarity">
    <text evidence="2">Belongs to the universal ribosomal protein uS4 family.</text>
</comment>
<dbReference type="EMBL" id="EF115541">
    <property type="protein sequence ID" value="ABK79415.1"/>
    <property type="molecule type" value="Genomic_DNA"/>
</dbReference>
<dbReference type="RefSeq" id="YP_010144427.1">
    <property type="nucleotide sequence ID" value="NC_056985.1"/>
</dbReference>
<dbReference type="RefSeq" id="YP_874655.1">
    <property type="nucleotide sequence ID" value="NC_008590.1"/>
</dbReference>
<dbReference type="SMR" id="A1E9J3"/>
<dbReference type="GeneID" id="4525135"/>
<dbReference type="GeneID" id="67140731"/>
<dbReference type="GO" id="GO:0009507">
    <property type="term" value="C:chloroplast"/>
    <property type="evidence" value="ECO:0007669"/>
    <property type="project" value="UniProtKB-SubCell"/>
</dbReference>
<dbReference type="GO" id="GO:0015935">
    <property type="term" value="C:small ribosomal subunit"/>
    <property type="evidence" value="ECO:0007669"/>
    <property type="project" value="InterPro"/>
</dbReference>
<dbReference type="GO" id="GO:0019843">
    <property type="term" value="F:rRNA binding"/>
    <property type="evidence" value="ECO:0007669"/>
    <property type="project" value="UniProtKB-UniRule"/>
</dbReference>
<dbReference type="GO" id="GO:0003735">
    <property type="term" value="F:structural constituent of ribosome"/>
    <property type="evidence" value="ECO:0007669"/>
    <property type="project" value="InterPro"/>
</dbReference>
<dbReference type="GO" id="GO:0042274">
    <property type="term" value="P:ribosomal small subunit biogenesis"/>
    <property type="evidence" value="ECO:0007669"/>
    <property type="project" value="TreeGrafter"/>
</dbReference>
<dbReference type="GO" id="GO:0006412">
    <property type="term" value="P:translation"/>
    <property type="evidence" value="ECO:0007669"/>
    <property type="project" value="UniProtKB-UniRule"/>
</dbReference>
<dbReference type="CDD" id="cd00165">
    <property type="entry name" value="S4"/>
    <property type="match status" value="1"/>
</dbReference>
<dbReference type="FunFam" id="1.10.1050.10:FF:000002">
    <property type="entry name" value="30S ribosomal protein S4, chloroplastic"/>
    <property type="match status" value="1"/>
</dbReference>
<dbReference type="FunFam" id="3.10.290.10:FF:000081">
    <property type="entry name" value="30S ribosomal protein S4, chloroplastic"/>
    <property type="match status" value="1"/>
</dbReference>
<dbReference type="Gene3D" id="1.10.1050.10">
    <property type="entry name" value="Ribosomal Protein S4 Delta 41, Chain A, domain 1"/>
    <property type="match status" value="1"/>
</dbReference>
<dbReference type="Gene3D" id="3.10.290.10">
    <property type="entry name" value="RNA-binding S4 domain"/>
    <property type="match status" value="1"/>
</dbReference>
<dbReference type="HAMAP" id="MF_01306_B">
    <property type="entry name" value="Ribosomal_uS4_B"/>
    <property type="match status" value="1"/>
</dbReference>
<dbReference type="InterPro" id="IPR022801">
    <property type="entry name" value="Ribosomal_uS4"/>
</dbReference>
<dbReference type="InterPro" id="IPR005709">
    <property type="entry name" value="Ribosomal_uS4_bac-type"/>
</dbReference>
<dbReference type="InterPro" id="IPR018079">
    <property type="entry name" value="Ribosomal_uS4_CS"/>
</dbReference>
<dbReference type="InterPro" id="IPR001912">
    <property type="entry name" value="Ribosomal_uS4_N"/>
</dbReference>
<dbReference type="InterPro" id="IPR002942">
    <property type="entry name" value="S4_RNA-bd"/>
</dbReference>
<dbReference type="InterPro" id="IPR036986">
    <property type="entry name" value="S4_RNA-bd_sf"/>
</dbReference>
<dbReference type="NCBIfam" id="NF003717">
    <property type="entry name" value="PRK05327.1"/>
    <property type="match status" value="1"/>
</dbReference>
<dbReference type="NCBIfam" id="TIGR01017">
    <property type="entry name" value="rpsD_bact"/>
    <property type="match status" value="1"/>
</dbReference>
<dbReference type="PANTHER" id="PTHR11831">
    <property type="entry name" value="30S 40S RIBOSOMAL PROTEIN"/>
    <property type="match status" value="1"/>
</dbReference>
<dbReference type="PANTHER" id="PTHR11831:SF4">
    <property type="entry name" value="SMALL RIBOSOMAL SUBUNIT PROTEIN US4M"/>
    <property type="match status" value="1"/>
</dbReference>
<dbReference type="Pfam" id="PF00163">
    <property type="entry name" value="Ribosomal_S4"/>
    <property type="match status" value="1"/>
</dbReference>
<dbReference type="Pfam" id="PF01479">
    <property type="entry name" value="S4"/>
    <property type="match status" value="1"/>
</dbReference>
<dbReference type="SMART" id="SM01390">
    <property type="entry name" value="Ribosomal_S4"/>
    <property type="match status" value="1"/>
</dbReference>
<dbReference type="SMART" id="SM00363">
    <property type="entry name" value="S4"/>
    <property type="match status" value="1"/>
</dbReference>
<dbReference type="SUPFAM" id="SSF55174">
    <property type="entry name" value="Alpha-L RNA-binding motif"/>
    <property type="match status" value="1"/>
</dbReference>
<dbReference type="PROSITE" id="PS00632">
    <property type="entry name" value="RIBOSOMAL_S4"/>
    <property type="match status" value="1"/>
</dbReference>
<dbReference type="PROSITE" id="PS50889">
    <property type="entry name" value="S4"/>
    <property type="match status" value="1"/>
</dbReference>
<protein>
    <recommendedName>
        <fullName evidence="2">Small ribosomal subunit protein uS4c</fullName>
    </recommendedName>
    <alternativeName>
        <fullName>30S ribosomal protein S4, chloroplastic</fullName>
    </alternativeName>
</protein>
<feature type="chain" id="PRO_0000293428" description="Small ribosomal subunit protein uS4c">
    <location>
        <begin position="1"/>
        <end position="201"/>
    </location>
</feature>
<feature type="domain" description="S4 RNA-binding">
    <location>
        <begin position="89"/>
        <end position="157"/>
    </location>
</feature>
<geneLocation type="chloroplast"/>